<protein>
    <recommendedName>
        <fullName evidence="1">Protein ROOT HAIR DEFECTIVE 3</fullName>
        <ecNumber evidence="1">3.6.5.-</ecNumber>
    </recommendedName>
    <alternativeName>
        <fullName evidence="1">Protein SEY1 homolog 1</fullName>
    </alternativeName>
</protein>
<name>RHD3_ORYSJ</name>
<gene>
    <name type="primary">RHD3</name>
    <name type="ordered locus">Os01g0575000</name>
    <name type="ordered locus">LOC_Os01g39310</name>
    <name type="ORF">B1112D09.4</name>
</gene>
<feature type="chain" id="PRO_0000407757" description="Protein ROOT HAIR DEFECTIVE 3">
    <location>
        <begin position="1"/>
        <end position="806"/>
    </location>
</feature>
<feature type="topological domain" description="Cytoplasmic" evidence="1">
    <location>
        <begin position="1"/>
        <end position="676"/>
    </location>
</feature>
<feature type="transmembrane region" description="Helical" evidence="1">
    <location>
        <begin position="677"/>
        <end position="697"/>
    </location>
</feature>
<feature type="topological domain" description="Lumenal" evidence="1">
    <location>
        <begin position="698"/>
        <end position="700"/>
    </location>
</feature>
<feature type="transmembrane region" description="Helical" evidence="1">
    <location>
        <begin position="701"/>
        <end position="721"/>
    </location>
</feature>
<feature type="topological domain" description="Cytoplasmic" evidence="1">
    <location>
        <begin position="722"/>
        <end position="806"/>
    </location>
</feature>
<feature type="domain" description="GB1/RHD3-type G" evidence="2">
    <location>
        <begin position="34"/>
        <end position="249"/>
    </location>
</feature>
<feature type="region of interest" description="Disordered" evidence="3">
    <location>
        <begin position="756"/>
        <end position="806"/>
    </location>
</feature>
<feature type="coiled-coil region" evidence="1">
    <location>
        <begin position="214"/>
        <end position="239"/>
    </location>
</feature>
<feature type="coiled-coil region" evidence="1">
    <location>
        <begin position="446"/>
        <end position="466"/>
    </location>
</feature>
<feature type="compositionally biased region" description="Basic and acidic residues" evidence="3">
    <location>
        <begin position="756"/>
        <end position="770"/>
    </location>
</feature>
<feature type="compositionally biased region" description="Polar residues" evidence="3">
    <location>
        <begin position="772"/>
        <end position="783"/>
    </location>
</feature>
<feature type="compositionally biased region" description="Low complexity" evidence="3">
    <location>
        <begin position="784"/>
        <end position="806"/>
    </location>
</feature>
<feature type="binding site" evidence="1">
    <location>
        <begin position="44"/>
        <end position="51"/>
    </location>
    <ligand>
        <name>GTP</name>
        <dbReference type="ChEBI" id="CHEBI:37565"/>
    </ligand>
</feature>
<sequence length="806" mass="90478">MDACFSTQLIDGDGVFNVSGLENFMKEVKMGECGLSYAVVSIMGPQSSGKSTLLNHLFRTNFREMDAFKGRSQTTKGIWMAKAHNIEPCTLVMDLEGTDGRERGEDDTAFEKQSALFALAVSDIVLINMWCHDIGREQAANKPLLKTVFQVMMRLFSPRKTTLLFVIRDKSKTPLENLEPILREDIQKIWDGVPKPHAHKETPLSEFFNVEVVALSSYEEKEELFKEQVASLRDRFQQSIAPGGLAGDRRGVVPASGFSFSSQQFWKVIKENKDLDLPAHKVMVATVRCEEIGNEKIASFTADEEWQQFEEAVQHDYVPGFGKKISNLLDRCLSEYDMEAIYFDEGVRTSKRHQLESKLLQLVNPAYQNILDHLRTRTLEVFKESFDKSLEKEGFAVAARDCTKVFLEKFDKGSEDAAIQQVKWDPSKIKDKLKRDIEAHVASVRAKKLSELCSKYEGQLTKALAEPVEALLDSASEETWPAIRKLLQRETKSAVSGFESAMASFELDEVTQKELLSKLESHGKSVVESKAKEEAARVLIRMKDRFSTLFSRDADSMPRVWTGKEDIKAITKTARSASMKLLSTMAAIRLDEDGDNIENTLSLALVDTARPGTTDRSIQSFDPLASSSWERVPEEKTLITPVQCKSLWRQFKAETEYTVTQAIAAQEANKRNNNWLPPPWALAAMAILGFNEFMTLLKNPLYLGVIFVVFLVGKAMWVQLDIAKEFQNGFLPAVLSLSTKFVPTIMNILKRLADEGQRPAAPERQREMELQPKSTRNGSHSNVTSAGSSSITSSESGPEYSSPIAH</sequence>
<dbReference type="EC" id="3.6.5.-" evidence="1"/>
<dbReference type="EMBL" id="AP003432">
    <property type="protein sequence ID" value="BAD45217.1"/>
    <property type="status" value="ALT_SEQ"/>
    <property type="molecule type" value="Genomic_DNA"/>
</dbReference>
<dbReference type="EMBL" id="AP008207">
    <property type="protein sequence ID" value="BAF05302.1"/>
    <property type="molecule type" value="Genomic_DNA"/>
</dbReference>
<dbReference type="EMBL" id="AP014957">
    <property type="protein sequence ID" value="BAS72819.1"/>
    <property type="molecule type" value="Genomic_DNA"/>
</dbReference>
<dbReference type="EMBL" id="AK101859">
    <property type="status" value="NOT_ANNOTATED_CDS"/>
    <property type="molecule type" value="mRNA"/>
</dbReference>
<dbReference type="RefSeq" id="XP_015617808.1">
    <property type="nucleotide sequence ID" value="XM_015762322.1"/>
</dbReference>
<dbReference type="SMR" id="Q0JLS6"/>
<dbReference type="FunCoup" id="Q0JLS6">
    <property type="interactions" value="1030"/>
</dbReference>
<dbReference type="STRING" id="39947.Q0JLS6"/>
<dbReference type="PaxDb" id="39947-Q0JLS6"/>
<dbReference type="EnsemblPlants" id="Os01t0575000-01">
    <property type="protein sequence ID" value="Os01t0575000-01"/>
    <property type="gene ID" value="Os01g0575000"/>
</dbReference>
<dbReference type="EnsemblPlants" id="Os01t0575000-02">
    <property type="protein sequence ID" value="Os01t0575000-02"/>
    <property type="gene ID" value="Os01g0575000"/>
</dbReference>
<dbReference type="Gramene" id="Os01t0575000-01">
    <property type="protein sequence ID" value="Os01t0575000-01"/>
    <property type="gene ID" value="Os01g0575000"/>
</dbReference>
<dbReference type="Gramene" id="Os01t0575000-02">
    <property type="protein sequence ID" value="Os01t0575000-02"/>
    <property type="gene ID" value="Os01g0575000"/>
</dbReference>
<dbReference type="KEGG" id="dosa:Os01g0575000"/>
<dbReference type="eggNOG" id="KOG2203">
    <property type="taxonomic scope" value="Eukaryota"/>
</dbReference>
<dbReference type="HOGENOM" id="CLU_011270_1_0_1"/>
<dbReference type="InParanoid" id="Q0JLS6"/>
<dbReference type="OMA" id="PTLICND"/>
<dbReference type="OrthoDB" id="1597724at2759"/>
<dbReference type="Proteomes" id="UP000000763">
    <property type="component" value="Chromosome 1"/>
</dbReference>
<dbReference type="Proteomes" id="UP000059680">
    <property type="component" value="Chromosome 1"/>
</dbReference>
<dbReference type="ExpressionAtlas" id="Q0JLS6">
    <property type="expression patterns" value="baseline and differential"/>
</dbReference>
<dbReference type="GO" id="GO:0005783">
    <property type="term" value="C:endoplasmic reticulum"/>
    <property type="evidence" value="ECO:0000318"/>
    <property type="project" value="GO_Central"/>
</dbReference>
<dbReference type="GO" id="GO:0005789">
    <property type="term" value="C:endoplasmic reticulum membrane"/>
    <property type="evidence" value="ECO:0007669"/>
    <property type="project" value="UniProtKB-SubCell"/>
</dbReference>
<dbReference type="GO" id="GO:0005525">
    <property type="term" value="F:GTP binding"/>
    <property type="evidence" value="ECO:0007669"/>
    <property type="project" value="UniProtKB-UniRule"/>
</dbReference>
<dbReference type="GO" id="GO:0003924">
    <property type="term" value="F:GTPase activity"/>
    <property type="evidence" value="ECO:0000318"/>
    <property type="project" value="GO_Central"/>
</dbReference>
<dbReference type="GO" id="GO:0016320">
    <property type="term" value="P:endoplasmic reticulum membrane fusion"/>
    <property type="evidence" value="ECO:0000318"/>
    <property type="project" value="GO_Central"/>
</dbReference>
<dbReference type="CDD" id="cd01851">
    <property type="entry name" value="GBP"/>
    <property type="match status" value="1"/>
</dbReference>
<dbReference type="FunFam" id="3.40.50.300:FF:002271">
    <property type="entry name" value="Protein ROOT HAIR DEFECTIVE 3 homolog"/>
    <property type="match status" value="1"/>
</dbReference>
<dbReference type="Gene3D" id="3.40.50.300">
    <property type="entry name" value="P-loop containing nucleotide triphosphate hydrolases"/>
    <property type="match status" value="1"/>
</dbReference>
<dbReference type="HAMAP" id="MF_03109">
    <property type="entry name" value="Sey1"/>
    <property type="match status" value="1"/>
</dbReference>
<dbReference type="InterPro" id="IPR030386">
    <property type="entry name" value="G_GB1_RHD3_dom"/>
</dbReference>
<dbReference type="InterPro" id="IPR027417">
    <property type="entry name" value="P-loop_NTPase"/>
</dbReference>
<dbReference type="InterPro" id="IPR008803">
    <property type="entry name" value="RHD3/Sey1"/>
</dbReference>
<dbReference type="InterPro" id="IPR046758">
    <property type="entry name" value="Sey1/RHD3-like_3HB"/>
</dbReference>
<dbReference type="PANTHER" id="PTHR45923">
    <property type="entry name" value="PROTEIN SEY1"/>
    <property type="match status" value="1"/>
</dbReference>
<dbReference type="PANTHER" id="PTHR45923:SF2">
    <property type="entry name" value="PROTEIN SEY1"/>
    <property type="match status" value="1"/>
</dbReference>
<dbReference type="Pfam" id="PF05879">
    <property type="entry name" value="RHD3_GTPase"/>
    <property type="match status" value="1"/>
</dbReference>
<dbReference type="Pfam" id="PF20428">
    <property type="entry name" value="Sey1_3HB"/>
    <property type="match status" value="1"/>
</dbReference>
<dbReference type="SUPFAM" id="SSF52540">
    <property type="entry name" value="P-loop containing nucleoside triphosphate hydrolases"/>
    <property type="match status" value="1"/>
</dbReference>
<dbReference type="PROSITE" id="PS51715">
    <property type="entry name" value="G_GB1_RHD3"/>
    <property type="match status" value="1"/>
</dbReference>
<keyword id="KW-0175">Coiled coil</keyword>
<keyword id="KW-0256">Endoplasmic reticulum</keyword>
<keyword id="KW-0342">GTP-binding</keyword>
<keyword id="KW-0378">Hydrolase</keyword>
<keyword id="KW-0472">Membrane</keyword>
<keyword id="KW-0547">Nucleotide-binding</keyword>
<keyword id="KW-1185">Reference proteome</keyword>
<keyword id="KW-0812">Transmembrane</keyword>
<keyword id="KW-1133">Transmembrane helix</keyword>
<organism>
    <name type="scientific">Oryza sativa subsp. japonica</name>
    <name type="common">Rice</name>
    <dbReference type="NCBI Taxonomy" id="39947"/>
    <lineage>
        <taxon>Eukaryota</taxon>
        <taxon>Viridiplantae</taxon>
        <taxon>Streptophyta</taxon>
        <taxon>Embryophyta</taxon>
        <taxon>Tracheophyta</taxon>
        <taxon>Spermatophyta</taxon>
        <taxon>Magnoliopsida</taxon>
        <taxon>Liliopsida</taxon>
        <taxon>Poales</taxon>
        <taxon>Poaceae</taxon>
        <taxon>BOP clade</taxon>
        <taxon>Oryzoideae</taxon>
        <taxon>Oryzeae</taxon>
        <taxon>Oryzinae</taxon>
        <taxon>Oryza</taxon>
        <taxon>Oryza sativa</taxon>
    </lineage>
</organism>
<accession>Q0JLS6</accession>
<accession>A0A0P0V4F3</accession>
<accession>Q656P7</accession>
<proteinExistence type="evidence at transcript level"/>
<evidence type="ECO:0000255" key="1">
    <source>
        <dbReference type="HAMAP-Rule" id="MF_03109"/>
    </source>
</evidence>
<evidence type="ECO:0000255" key="2">
    <source>
        <dbReference type="PROSITE-ProRule" id="PRU01052"/>
    </source>
</evidence>
<evidence type="ECO:0000256" key="3">
    <source>
        <dbReference type="SAM" id="MobiDB-lite"/>
    </source>
</evidence>
<evidence type="ECO:0000305" key="4"/>
<reference key="1">
    <citation type="journal article" date="2002" name="Nature">
        <title>The genome sequence and structure of rice chromosome 1.</title>
        <authorList>
            <person name="Sasaki T."/>
            <person name="Matsumoto T."/>
            <person name="Yamamoto K."/>
            <person name="Sakata K."/>
            <person name="Baba T."/>
            <person name="Katayose Y."/>
            <person name="Wu J."/>
            <person name="Niimura Y."/>
            <person name="Cheng Z."/>
            <person name="Nagamura Y."/>
            <person name="Antonio B.A."/>
            <person name="Kanamori H."/>
            <person name="Hosokawa S."/>
            <person name="Masukawa M."/>
            <person name="Arikawa K."/>
            <person name="Chiden Y."/>
            <person name="Hayashi M."/>
            <person name="Okamoto M."/>
            <person name="Ando T."/>
            <person name="Aoki H."/>
            <person name="Arita K."/>
            <person name="Hamada M."/>
            <person name="Harada C."/>
            <person name="Hijishita S."/>
            <person name="Honda M."/>
            <person name="Ichikawa Y."/>
            <person name="Idonuma A."/>
            <person name="Iijima M."/>
            <person name="Ikeda M."/>
            <person name="Ikeno M."/>
            <person name="Ito S."/>
            <person name="Ito T."/>
            <person name="Ito Y."/>
            <person name="Ito Y."/>
            <person name="Iwabuchi A."/>
            <person name="Kamiya K."/>
            <person name="Karasawa W."/>
            <person name="Katagiri S."/>
            <person name="Kikuta A."/>
            <person name="Kobayashi N."/>
            <person name="Kono I."/>
            <person name="Machita K."/>
            <person name="Maehara T."/>
            <person name="Mizuno H."/>
            <person name="Mizubayashi T."/>
            <person name="Mukai Y."/>
            <person name="Nagasaki H."/>
            <person name="Nakashima M."/>
            <person name="Nakama Y."/>
            <person name="Nakamichi Y."/>
            <person name="Nakamura M."/>
            <person name="Namiki N."/>
            <person name="Negishi M."/>
            <person name="Ohta I."/>
            <person name="Ono N."/>
            <person name="Saji S."/>
            <person name="Sakai K."/>
            <person name="Shibata M."/>
            <person name="Shimokawa T."/>
            <person name="Shomura A."/>
            <person name="Song J."/>
            <person name="Takazaki Y."/>
            <person name="Terasawa K."/>
            <person name="Tsuji K."/>
            <person name="Waki K."/>
            <person name="Yamagata H."/>
            <person name="Yamane H."/>
            <person name="Yoshiki S."/>
            <person name="Yoshihara R."/>
            <person name="Yukawa K."/>
            <person name="Zhong H."/>
            <person name="Iwama H."/>
            <person name="Endo T."/>
            <person name="Ito H."/>
            <person name="Hahn J.H."/>
            <person name="Kim H.-I."/>
            <person name="Eun M.-Y."/>
            <person name="Yano M."/>
            <person name="Jiang J."/>
            <person name="Gojobori T."/>
        </authorList>
    </citation>
    <scope>NUCLEOTIDE SEQUENCE [LARGE SCALE GENOMIC DNA]</scope>
    <source>
        <strain>cv. Nipponbare</strain>
    </source>
</reference>
<reference key="2">
    <citation type="journal article" date="2005" name="Nature">
        <title>The map-based sequence of the rice genome.</title>
        <authorList>
            <consortium name="International rice genome sequencing project (IRGSP)"/>
        </authorList>
    </citation>
    <scope>NUCLEOTIDE SEQUENCE [LARGE SCALE GENOMIC DNA]</scope>
    <source>
        <strain>cv. Nipponbare</strain>
    </source>
</reference>
<reference key="3">
    <citation type="journal article" date="2008" name="Nucleic Acids Res.">
        <title>The rice annotation project database (RAP-DB): 2008 update.</title>
        <authorList>
            <consortium name="The rice annotation project (RAP)"/>
        </authorList>
    </citation>
    <scope>GENOME REANNOTATION</scope>
    <source>
        <strain>cv. Nipponbare</strain>
    </source>
</reference>
<reference key="4">
    <citation type="journal article" date="2013" name="Rice">
        <title>Improvement of the Oryza sativa Nipponbare reference genome using next generation sequence and optical map data.</title>
        <authorList>
            <person name="Kawahara Y."/>
            <person name="de la Bastide M."/>
            <person name="Hamilton J.P."/>
            <person name="Kanamori H."/>
            <person name="McCombie W.R."/>
            <person name="Ouyang S."/>
            <person name="Schwartz D.C."/>
            <person name="Tanaka T."/>
            <person name="Wu J."/>
            <person name="Zhou S."/>
            <person name="Childs K.L."/>
            <person name="Davidson R.M."/>
            <person name="Lin H."/>
            <person name="Quesada-Ocampo L."/>
            <person name="Vaillancourt B."/>
            <person name="Sakai H."/>
            <person name="Lee S.S."/>
            <person name="Kim J."/>
            <person name="Numa H."/>
            <person name="Itoh T."/>
            <person name="Buell C.R."/>
            <person name="Matsumoto T."/>
        </authorList>
    </citation>
    <scope>GENOME REANNOTATION</scope>
    <source>
        <strain>cv. Nipponbare</strain>
    </source>
</reference>
<reference key="5">
    <citation type="journal article" date="2003" name="Science">
        <title>Collection, mapping, and annotation of over 28,000 cDNA clones from japonica rice.</title>
        <authorList>
            <consortium name="The rice full-length cDNA consortium"/>
        </authorList>
    </citation>
    <scope>NUCLEOTIDE SEQUENCE [LARGE SCALE MRNA]</scope>
    <source>
        <strain>cv. Nipponbare</strain>
    </source>
</reference>
<comment type="function">
    <text evidence="1">Probable GTP-binding protein that may be involved in cell development.</text>
</comment>
<comment type="subcellular location">
    <subcellularLocation>
        <location evidence="1">Endoplasmic reticulum membrane</location>
        <topology evidence="1">Multi-pass membrane protein</topology>
    </subcellularLocation>
</comment>
<comment type="similarity">
    <text evidence="2">Belongs to the TRAFAC class dynamin-like GTPase superfamily. GB1/RHD3 GTPase family. RHD3 subfamily.</text>
</comment>
<comment type="sequence caution" evidence="4">
    <conflict type="frameshift">
        <sequence resource="EMBL" id="AK101859"/>
    </conflict>
</comment>
<comment type="sequence caution" evidence="4">
    <conflict type="erroneous gene model prediction">
        <sequence resource="EMBL-CDS" id="BAD45217"/>
    </conflict>
</comment>